<gene>
    <name evidence="1" type="primary">trpA</name>
    <name type="ordered locus">RALTA_A2110</name>
</gene>
<evidence type="ECO:0000255" key="1">
    <source>
        <dbReference type="HAMAP-Rule" id="MF_00131"/>
    </source>
</evidence>
<keyword id="KW-0028">Amino-acid biosynthesis</keyword>
<keyword id="KW-0057">Aromatic amino acid biosynthesis</keyword>
<keyword id="KW-0456">Lyase</keyword>
<keyword id="KW-0822">Tryptophan biosynthesis</keyword>
<feature type="chain" id="PRO_1000095708" description="Tryptophan synthase alpha chain">
    <location>
        <begin position="1"/>
        <end position="265"/>
    </location>
</feature>
<feature type="active site" description="Proton acceptor" evidence="1">
    <location>
        <position position="49"/>
    </location>
</feature>
<feature type="active site" description="Proton acceptor" evidence="1">
    <location>
        <position position="60"/>
    </location>
</feature>
<proteinExistence type="inferred from homology"/>
<comment type="function">
    <text evidence="1">The alpha subunit is responsible for the aldol cleavage of indoleglycerol phosphate to indole and glyceraldehyde 3-phosphate.</text>
</comment>
<comment type="catalytic activity">
    <reaction evidence="1">
        <text>(1S,2R)-1-C-(indol-3-yl)glycerol 3-phosphate + L-serine = D-glyceraldehyde 3-phosphate + L-tryptophan + H2O</text>
        <dbReference type="Rhea" id="RHEA:10532"/>
        <dbReference type="ChEBI" id="CHEBI:15377"/>
        <dbReference type="ChEBI" id="CHEBI:33384"/>
        <dbReference type="ChEBI" id="CHEBI:57912"/>
        <dbReference type="ChEBI" id="CHEBI:58866"/>
        <dbReference type="ChEBI" id="CHEBI:59776"/>
        <dbReference type="EC" id="4.2.1.20"/>
    </reaction>
</comment>
<comment type="pathway">
    <text evidence="1">Amino-acid biosynthesis; L-tryptophan biosynthesis; L-tryptophan from chorismate: step 5/5.</text>
</comment>
<comment type="subunit">
    <text evidence="1">Tetramer of two alpha and two beta chains.</text>
</comment>
<comment type="similarity">
    <text evidence="1">Belongs to the TrpA family.</text>
</comment>
<accession>B3R113</accession>
<name>TRPA_CUPTR</name>
<protein>
    <recommendedName>
        <fullName evidence="1">Tryptophan synthase alpha chain</fullName>
        <ecNumber evidence="1">4.2.1.20</ecNumber>
    </recommendedName>
</protein>
<reference key="1">
    <citation type="journal article" date="2008" name="Genome Res.">
        <title>Genome sequence of the beta-rhizobium Cupriavidus taiwanensis and comparative genomics of rhizobia.</title>
        <authorList>
            <person name="Amadou C."/>
            <person name="Pascal G."/>
            <person name="Mangenot S."/>
            <person name="Glew M."/>
            <person name="Bontemps C."/>
            <person name="Capela D."/>
            <person name="Carrere S."/>
            <person name="Cruveiller S."/>
            <person name="Dossat C."/>
            <person name="Lajus A."/>
            <person name="Marchetti M."/>
            <person name="Poinsot V."/>
            <person name="Rouy Z."/>
            <person name="Servin B."/>
            <person name="Saad M."/>
            <person name="Schenowitz C."/>
            <person name="Barbe V."/>
            <person name="Batut J."/>
            <person name="Medigue C."/>
            <person name="Masson-Boivin C."/>
        </authorList>
    </citation>
    <scope>NUCLEOTIDE SEQUENCE [LARGE SCALE GENOMIC DNA]</scope>
    <source>
        <strain>DSM 17343 / BCRC 17206 / CCUG 44338 / CIP 107171 / LMG 19424 / R1</strain>
    </source>
</reference>
<sequence>MSRIQKTFAALAAQQKKGLIPFITAGDPEPGLTVALMHALVAGGADVIELGVPFSDPMADGPVIQRASERALAQGVSLTQVLQWVREFRQTNTDTPVVLMGYANPIERMGEAAFAAAASAAGVDGVLVVDYPPEECESFAGLMRDHGMDPIFLLAPTSTDARIEAVAKVASGYLYYVSLKGVTGSASIDLDSVAARLPLIKQHANLPVGVGFGIRDAQTARAIGSVADAVVIGSRLVQLLEDTPREQAVTALQSFIAEIRQALDA</sequence>
<dbReference type="EC" id="4.2.1.20" evidence="1"/>
<dbReference type="EMBL" id="CU633749">
    <property type="protein sequence ID" value="CAQ70047.1"/>
    <property type="molecule type" value="Genomic_DNA"/>
</dbReference>
<dbReference type="RefSeq" id="WP_012353353.1">
    <property type="nucleotide sequence ID" value="NC_010528.1"/>
</dbReference>
<dbReference type="SMR" id="B3R113"/>
<dbReference type="GeneID" id="29762588"/>
<dbReference type="KEGG" id="cti:RALTA_A2110"/>
<dbReference type="eggNOG" id="COG0159">
    <property type="taxonomic scope" value="Bacteria"/>
</dbReference>
<dbReference type="HOGENOM" id="CLU_016734_0_0_4"/>
<dbReference type="BioCyc" id="CTAI977880:RALTA_RS10245-MONOMER"/>
<dbReference type="UniPathway" id="UPA00035">
    <property type="reaction ID" value="UER00044"/>
</dbReference>
<dbReference type="Proteomes" id="UP000001692">
    <property type="component" value="Chromosome 1"/>
</dbReference>
<dbReference type="GO" id="GO:0005829">
    <property type="term" value="C:cytosol"/>
    <property type="evidence" value="ECO:0007669"/>
    <property type="project" value="TreeGrafter"/>
</dbReference>
<dbReference type="GO" id="GO:0004834">
    <property type="term" value="F:tryptophan synthase activity"/>
    <property type="evidence" value="ECO:0007669"/>
    <property type="project" value="UniProtKB-UniRule"/>
</dbReference>
<dbReference type="CDD" id="cd04724">
    <property type="entry name" value="Tryptophan_synthase_alpha"/>
    <property type="match status" value="1"/>
</dbReference>
<dbReference type="FunFam" id="3.20.20.70:FF:000037">
    <property type="entry name" value="Tryptophan synthase alpha chain"/>
    <property type="match status" value="1"/>
</dbReference>
<dbReference type="Gene3D" id="3.20.20.70">
    <property type="entry name" value="Aldolase class I"/>
    <property type="match status" value="1"/>
</dbReference>
<dbReference type="HAMAP" id="MF_00131">
    <property type="entry name" value="Trp_synth_alpha"/>
    <property type="match status" value="1"/>
</dbReference>
<dbReference type="InterPro" id="IPR013785">
    <property type="entry name" value="Aldolase_TIM"/>
</dbReference>
<dbReference type="InterPro" id="IPR011060">
    <property type="entry name" value="RibuloseP-bd_barrel"/>
</dbReference>
<dbReference type="InterPro" id="IPR018204">
    <property type="entry name" value="Trp_synthase_alpha_AS"/>
</dbReference>
<dbReference type="InterPro" id="IPR002028">
    <property type="entry name" value="Trp_synthase_suA"/>
</dbReference>
<dbReference type="NCBIfam" id="TIGR00262">
    <property type="entry name" value="trpA"/>
    <property type="match status" value="1"/>
</dbReference>
<dbReference type="PANTHER" id="PTHR43406:SF1">
    <property type="entry name" value="TRYPTOPHAN SYNTHASE ALPHA CHAIN, CHLOROPLASTIC"/>
    <property type="match status" value="1"/>
</dbReference>
<dbReference type="PANTHER" id="PTHR43406">
    <property type="entry name" value="TRYPTOPHAN SYNTHASE, ALPHA CHAIN"/>
    <property type="match status" value="1"/>
</dbReference>
<dbReference type="Pfam" id="PF00290">
    <property type="entry name" value="Trp_syntA"/>
    <property type="match status" value="1"/>
</dbReference>
<dbReference type="SUPFAM" id="SSF51366">
    <property type="entry name" value="Ribulose-phoshate binding barrel"/>
    <property type="match status" value="1"/>
</dbReference>
<dbReference type="PROSITE" id="PS00167">
    <property type="entry name" value="TRP_SYNTHASE_ALPHA"/>
    <property type="match status" value="1"/>
</dbReference>
<organism>
    <name type="scientific">Cupriavidus taiwanensis (strain DSM 17343 / BCRC 17206 / CCUG 44338 / CIP 107171 / LMG 19424 / R1)</name>
    <name type="common">Ralstonia taiwanensis (strain LMG 19424)</name>
    <dbReference type="NCBI Taxonomy" id="977880"/>
    <lineage>
        <taxon>Bacteria</taxon>
        <taxon>Pseudomonadati</taxon>
        <taxon>Pseudomonadota</taxon>
        <taxon>Betaproteobacteria</taxon>
        <taxon>Burkholderiales</taxon>
        <taxon>Burkholderiaceae</taxon>
        <taxon>Cupriavidus</taxon>
    </lineage>
</organism>